<keyword id="KW-0025">Alternative splicing</keyword>
<keyword id="KW-0067">ATP-binding</keyword>
<keyword id="KW-0227">DNA damage</keyword>
<keyword id="KW-0234">DNA repair</keyword>
<keyword id="KW-0347">Helicase</keyword>
<keyword id="KW-0378">Hydrolase</keyword>
<keyword id="KW-0413">Isomerase</keyword>
<keyword id="KW-0479">Metal-binding</keyword>
<keyword id="KW-0547">Nucleotide-binding</keyword>
<keyword id="KW-0539">Nucleus</keyword>
<keyword id="KW-0597">Phosphoprotein</keyword>
<keyword id="KW-1185">Reference proteome</keyword>
<keyword id="KW-0862">Zinc</keyword>
<keyword id="KW-0863">Zinc-finger</keyword>
<comment type="function">
    <text evidence="1">5'-3' DNA helicase which is recruited to sites of DNA damage and promotes repair of replication-blocking DNA lesions through stimulation of homologous recombination (HR). Promotes HR by directly stimulating RAD51-mediated strand exchange activity. Not required to load RAD51 at sites of DNA damage but promotes recombinational repair after RAD51 recruitment. Also promotes HR by positively regulating EXO1-mediated DNA end resection of DNA double-strand breaks. Required for recruitment of replication protein RPA2 to DNA damage sites. Promotes the initiation of the G2/M checkpoint but not its maintenance. Catalyzes Holliday junction branch migration and dissociation of D-loops and DNA flaps.</text>
</comment>
<comment type="catalytic activity">
    <reaction evidence="1">
        <text>ATP + H2O = ADP + phosphate + H(+)</text>
        <dbReference type="Rhea" id="RHEA:13065"/>
        <dbReference type="ChEBI" id="CHEBI:15377"/>
        <dbReference type="ChEBI" id="CHEBI:15378"/>
        <dbReference type="ChEBI" id="CHEBI:30616"/>
        <dbReference type="ChEBI" id="CHEBI:43474"/>
        <dbReference type="ChEBI" id="CHEBI:456216"/>
        <dbReference type="EC" id="5.6.2.3"/>
    </reaction>
</comment>
<comment type="catalytic activity">
    <reaction evidence="1">
        <text>Couples ATP hydrolysis with the unwinding of duplex DNA at the replication fork by translocating in the 5'-3' direction. This creates two antiparallel DNA single strands (ssDNA). The leading ssDNA polymer is the template for DNA polymerase III holoenzyme which synthesizes a continuous strand.</text>
        <dbReference type="EC" id="5.6.2.3"/>
    </reaction>
</comment>
<comment type="subunit">
    <text evidence="1">Interacts with DNA repair protein RAD51; the interaction promotes RAD51 strand exchange activity. Also interacts with DNA repair proteins EXO1 and BRCA1; the interactions are increased following DNA damage induction.</text>
</comment>
<comment type="subcellular location">
    <subcellularLocation>
        <location evidence="1">Nucleus</location>
    </subcellularLocation>
</comment>
<comment type="alternative products">
    <event type="alternative splicing"/>
    <isoform>
        <id>Q0VGT4-1</id>
        <name>1</name>
        <sequence type="displayed"/>
    </isoform>
    <isoform>
        <id>Q0VGT4-2</id>
        <name>2</name>
        <sequence type="described" ref="VSP_053245 VSP_053246"/>
    </isoform>
</comment>
<protein>
    <recommendedName>
        <fullName evidence="1">5'-3' DNA helicase ZGRF1</fullName>
        <ecNumber evidence="1">5.6.2.3</ecNumber>
    </recommendedName>
    <alternativeName>
        <fullName>GRF-type zinc finger domain-containing protein 1</fullName>
    </alternativeName>
</protein>
<reference key="1">
    <citation type="journal article" date="2009" name="PLoS Biol.">
        <title>Lineage-specific biology revealed by a finished genome assembly of the mouse.</title>
        <authorList>
            <person name="Church D.M."/>
            <person name="Goodstadt L."/>
            <person name="Hillier L.W."/>
            <person name="Zody M.C."/>
            <person name="Goldstein S."/>
            <person name="She X."/>
            <person name="Bult C.J."/>
            <person name="Agarwala R."/>
            <person name="Cherry J.L."/>
            <person name="DiCuccio M."/>
            <person name="Hlavina W."/>
            <person name="Kapustin Y."/>
            <person name="Meric P."/>
            <person name="Maglott D."/>
            <person name="Birtle Z."/>
            <person name="Marques A.C."/>
            <person name="Graves T."/>
            <person name="Zhou S."/>
            <person name="Teague B."/>
            <person name="Potamousis K."/>
            <person name="Churas C."/>
            <person name="Place M."/>
            <person name="Herschleb J."/>
            <person name="Runnheim R."/>
            <person name="Forrest D."/>
            <person name="Amos-Landgraf J."/>
            <person name="Schwartz D.C."/>
            <person name="Cheng Z."/>
            <person name="Lindblad-Toh K."/>
            <person name="Eichler E.E."/>
            <person name="Ponting C.P."/>
        </authorList>
    </citation>
    <scope>NUCLEOTIDE SEQUENCE [LARGE SCALE GENOMIC DNA]</scope>
    <source>
        <strain>C57BL/6J</strain>
    </source>
</reference>
<reference key="2">
    <citation type="journal article" date="2004" name="Genome Res.">
        <title>The status, quality, and expansion of the NIH full-length cDNA project: the Mammalian Gene Collection (MGC).</title>
        <authorList>
            <consortium name="The MGC Project Team"/>
        </authorList>
    </citation>
    <scope>NUCLEOTIDE SEQUENCE [LARGE SCALE MRNA] (ISOFORM 2)</scope>
    <source>
        <strain>C57BL/6J</strain>
        <tissue>Eye</tissue>
    </source>
</reference>
<reference key="3">
    <citation type="journal article" date="2010" name="Cell">
        <title>A tissue-specific atlas of mouse protein phosphorylation and expression.</title>
        <authorList>
            <person name="Huttlin E.L."/>
            <person name="Jedrychowski M.P."/>
            <person name="Elias J.E."/>
            <person name="Goswami T."/>
            <person name="Rad R."/>
            <person name="Beausoleil S.A."/>
            <person name="Villen J."/>
            <person name="Haas W."/>
            <person name="Sowa M.E."/>
            <person name="Gygi S.P."/>
        </authorList>
    </citation>
    <scope>PHOSPHORYLATION [LARGE SCALE ANALYSIS] AT SER-331 AND SER-445</scope>
    <scope>IDENTIFICATION BY MASS SPECTROMETRY [LARGE SCALE ANALYSIS]</scope>
    <source>
        <tissue>Testis</tissue>
    </source>
</reference>
<gene>
    <name type="primary">Zgrf1</name>
</gene>
<accession>Q0VGT4</accession>
<accession>E9Q2K6</accession>
<evidence type="ECO:0000250" key="1">
    <source>
        <dbReference type="UniProtKB" id="Q86YA3"/>
    </source>
</evidence>
<evidence type="ECO:0000255" key="2">
    <source>
        <dbReference type="PROSITE-ProRule" id="PRU01343"/>
    </source>
</evidence>
<evidence type="ECO:0000256" key="3">
    <source>
        <dbReference type="SAM" id="MobiDB-lite"/>
    </source>
</evidence>
<evidence type="ECO:0000303" key="4">
    <source>
    </source>
</evidence>
<evidence type="ECO:0007744" key="5">
    <source>
    </source>
</evidence>
<name>ZGRF1_MOUSE</name>
<proteinExistence type="evidence at protein level"/>
<sequence length="1863" mass="205737">MECQEFIVLYTHQKMKKSKVWQDGVLKITHLGNKAILYDDKGACLESLFLKCLEVKPGDDLESERYLITVEEAKAVGSRAVEPDGSREALESGSRTLVSSSRSLGCQPSGLKRKATGFQRPYKMPKKVTITENSEPAASLGDENPGPPGPRLLPTFSSTLPLFPTVGQKDLTPVSTDNQSPITFSNRERSDTPLSLPSSYFKINTNTLGKEDKLCFPVSSETKHSDSLLASEPMRRNGLDSHCPGVSQNVRSKAQILALLKSSSTNRKDLHGEIPGHFPKIEPQGCLNIISKPEEDYAETQSIGNLRCEQQSENPTRTTSRWARYLPSQRSPPCSAADENDTEDKPEAQEDVNIFNLSELLQKKSELFETCSKKGELHSEDKPVDNTCQYWNQEDNLAPSFCKNSSVLVSCSSKENASLLSESDIQYSSKVPVNQHEKVWTREGSQGADADAALEPEYRPVSPLPEIGHKQTEVEASLSTSSRISDDIADMGSKSNADREDLKTVHKAVQPFLEVSFNLSNFETSDTDEASQEDSRLSQDSERWEKEAVLTDDSCVQKSCEDIGCREIVGKLPLLSSTDDEPKEALPADGTLLSEFCDRTCVGFNSGPHGDVKTGKALEGQCHSDTGSSLDSSLEWSEDVAGDSREDASQSIQGNAINCGGVSPSKKPRGVNRSLYSPYLLTAVTDPAPENSDLLSEARKSPAIEVSRALLECPCEHRASQQPVEFQGHQVKGSATSGVMVRGHSLQRGCTQFPDSIDYENFLTDTCVWTPGLPSTYGQTDFLQVISPEQKIPALSPAPTFSFNTRNEDTVLELSEESLKTRTLPGLKTIGFQDSKNLQRFPFLSGASAPFATLPADDGPAVLDPCSFMIDDDAREPSGSSMLNLCEESGLSFDLGLEGQGGTPGGVSLLPKSSTQSKWLKYQNPPQCNSTAPNRLASEVTEGLFAEAVSGLHFSHTSESESSVDPVRLQMIKGLLHQQQQDLVSRKQAFSLTLNQTCKTQEHETVLGSSASKNCRAKDLQEINNSDLCFPNGQKIISAYLPQRQVHIPAVFQSPAHYRQVFTASIIEHLNILLFELAQRLYKALSKVDISFYTSSKGETMRSGKNNSPSCHHNQPAKLVMVKKEGPNKGRLFYTCDKSKDNQCKFFKWLEEVTPGQLPQNTSQSTMVFNDIKSIGSYLRSQKVPVYEECQLLLRRGFDFQRKQCGKLKKLTTVNPDFYSETKSKIYLKLSRRESSSVYSKGDLWVISKTLDFELDTFIACSAFFGPSSVNEVELLPLKGYFPSNWPTNITVHALLVCNASTELTTLQNIQDYFNPAALPLMPYLLAMSQSATVSSKNISKRKFIPPAITSIKTKTELHLGATLQLARELINVHRLNKDQATALIQIAQMMASQGSDEDALEPFGHSLPITVIHGVFGAGKSYLLAVVILFLVELFEKCDSGTVGNARPWKVLVSSSTNVAVDRVLLGLLSLGFEKFIRVGSVRKIAKPVLPYSLHAGSDNESEQLKELNALLKEELTPIERVYVRKSIEQHKLGTNRVLLKQVRVVGVTCAACAFPCLNDLKFPVVVLDECSQMTEPASLLPIARFQCEKLILVGDPKQLPPTIQGSDAAHENGLEQTLFDRLCLMGHKPVLLRTQYRCHPAISAIANDLFYEGSLVNGISERERSPVLEWLPTLCFYNVTGAEQVERENSFVNVAEATFTLKLIQSLMASGVESCMIGVITLYKSQMYKICNLLSAVDVGHPDVKAVQVSTVDAFQGAEKEITILSCVRTRQVGFIDSEKRMNVALTRGRRHLLIVGSLSCLRKNRLWGRVIQHCEGREDGLQHASQCEPQLDHLLKDYLEKQAEEKQKKKEKEKSKDKSH</sequence>
<organism>
    <name type="scientific">Mus musculus</name>
    <name type="common">Mouse</name>
    <dbReference type="NCBI Taxonomy" id="10090"/>
    <lineage>
        <taxon>Eukaryota</taxon>
        <taxon>Metazoa</taxon>
        <taxon>Chordata</taxon>
        <taxon>Craniata</taxon>
        <taxon>Vertebrata</taxon>
        <taxon>Euteleostomi</taxon>
        <taxon>Mammalia</taxon>
        <taxon>Eutheria</taxon>
        <taxon>Euarchontoglires</taxon>
        <taxon>Glires</taxon>
        <taxon>Rodentia</taxon>
        <taxon>Myomorpha</taxon>
        <taxon>Muroidea</taxon>
        <taxon>Muridae</taxon>
        <taxon>Murinae</taxon>
        <taxon>Mus</taxon>
        <taxon>Mus</taxon>
    </lineage>
</organism>
<dbReference type="EC" id="5.6.2.3" evidence="1"/>
<dbReference type="EMBL" id="AC113952">
    <property type="status" value="NOT_ANNOTATED_CDS"/>
    <property type="molecule type" value="Genomic_DNA"/>
</dbReference>
<dbReference type="EMBL" id="AC158308">
    <property type="status" value="NOT_ANNOTATED_CDS"/>
    <property type="molecule type" value="Genomic_DNA"/>
</dbReference>
<dbReference type="EMBL" id="BC085187">
    <property type="protein sequence ID" value="AAH85187.1"/>
    <property type="molecule type" value="mRNA"/>
</dbReference>
<dbReference type="CCDS" id="CCDS51066.1">
    <molecule id="Q0VGT4-1"/>
</dbReference>
<dbReference type="RefSeq" id="NP_932114.2">
    <molecule id="Q0VGT4-1"/>
    <property type="nucleotide sequence ID" value="NM_197997.2"/>
</dbReference>
<dbReference type="SMR" id="Q0VGT4"/>
<dbReference type="BioGRID" id="214829">
    <property type="interactions" value="1"/>
</dbReference>
<dbReference type="FunCoup" id="Q0VGT4">
    <property type="interactions" value="628"/>
</dbReference>
<dbReference type="STRING" id="10090.ENSMUSP00000044432"/>
<dbReference type="GlyGen" id="Q0VGT4">
    <property type="glycosylation" value="2 sites"/>
</dbReference>
<dbReference type="iPTMnet" id="Q0VGT4"/>
<dbReference type="PhosphoSitePlus" id="Q0VGT4"/>
<dbReference type="jPOST" id="Q0VGT4"/>
<dbReference type="PaxDb" id="10090-ENSMUSP00000044432"/>
<dbReference type="ProteomicsDB" id="275368">
    <molecule id="Q0VGT4-1"/>
</dbReference>
<dbReference type="ProteomicsDB" id="275369">
    <molecule id="Q0VGT4-2"/>
</dbReference>
<dbReference type="Ensembl" id="ENSMUST00000043108.9">
    <molecule id="Q0VGT4-1"/>
    <property type="protein sequence ID" value="ENSMUSP00000044432.5"/>
    <property type="gene ID" value="ENSMUSG00000051278.13"/>
</dbReference>
<dbReference type="Ensembl" id="ENSMUST00000195955.2">
    <molecule id="Q0VGT4-2"/>
    <property type="protein sequence ID" value="ENSMUSP00000142886.2"/>
    <property type="gene ID" value="ENSMUSG00000051278.13"/>
</dbReference>
<dbReference type="Ensembl" id="ENSMUST00000196141.5">
    <molecule id="Q0VGT4-1"/>
    <property type="protein sequence ID" value="ENSMUSP00000143761.2"/>
    <property type="gene ID" value="ENSMUSG00000051278.13"/>
</dbReference>
<dbReference type="GeneID" id="71643"/>
<dbReference type="KEGG" id="mmu:71643"/>
<dbReference type="UCSC" id="uc008rhe.1">
    <molecule id="Q0VGT4-2"/>
    <property type="organism name" value="mouse"/>
</dbReference>
<dbReference type="UCSC" id="uc008rhh.2">
    <molecule id="Q0VGT4-1"/>
    <property type="organism name" value="mouse"/>
</dbReference>
<dbReference type="AGR" id="MGI:1918893"/>
<dbReference type="CTD" id="55345"/>
<dbReference type="MGI" id="MGI:1918893">
    <property type="gene designation" value="Zgrf1"/>
</dbReference>
<dbReference type="VEuPathDB" id="HostDB:ENSMUSG00000051278"/>
<dbReference type="eggNOG" id="KOG1802">
    <property type="taxonomic scope" value="Eukaryota"/>
</dbReference>
<dbReference type="GeneTree" id="ENSGT00940000162335"/>
<dbReference type="HOGENOM" id="CLU_236590_0_0_1"/>
<dbReference type="InParanoid" id="Q0VGT4"/>
<dbReference type="OMA" id="EGTRPGM"/>
<dbReference type="OrthoDB" id="6513042at2759"/>
<dbReference type="PhylomeDB" id="Q0VGT4"/>
<dbReference type="TreeFam" id="TF317543"/>
<dbReference type="BioGRID-ORCS" id="71643">
    <property type="hits" value="1 hit in 79 CRISPR screens"/>
</dbReference>
<dbReference type="ChiTaRS" id="Zgrf1">
    <property type="organism name" value="mouse"/>
</dbReference>
<dbReference type="PRO" id="PR:Q0VGT4"/>
<dbReference type="Proteomes" id="UP000000589">
    <property type="component" value="Chromosome 3"/>
</dbReference>
<dbReference type="RNAct" id="Q0VGT4">
    <property type="molecule type" value="protein"/>
</dbReference>
<dbReference type="Bgee" id="ENSMUSG00000051278">
    <property type="expression patterns" value="Expressed in manus and 148 other cell types or tissues"/>
</dbReference>
<dbReference type="ExpressionAtlas" id="Q0VGT4">
    <property type="expression patterns" value="baseline and differential"/>
</dbReference>
<dbReference type="GO" id="GO:0005634">
    <property type="term" value="C:nucleus"/>
    <property type="evidence" value="ECO:0000250"/>
    <property type="project" value="UniProtKB"/>
</dbReference>
<dbReference type="GO" id="GO:0043139">
    <property type="term" value="F:5'-3' DNA helicase activity"/>
    <property type="evidence" value="ECO:0000250"/>
    <property type="project" value="UniProtKB"/>
</dbReference>
<dbReference type="GO" id="GO:0005524">
    <property type="term" value="F:ATP binding"/>
    <property type="evidence" value="ECO:0007669"/>
    <property type="project" value="UniProtKB-KW"/>
</dbReference>
<dbReference type="GO" id="GO:0016787">
    <property type="term" value="F:hydrolase activity"/>
    <property type="evidence" value="ECO:0007669"/>
    <property type="project" value="UniProtKB-KW"/>
</dbReference>
<dbReference type="GO" id="GO:0008270">
    <property type="term" value="F:zinc ion binding"/>
    <property type="evidence" value="ECO:0007669"/>
    <property type="project" value="UniProtKB-KW"/>
</dbReference>
<dbReference type="GO" id="GO:0000725">
    <property type="term" value="P:recombinational repair"/>
    <property type="evidence" value="ECO:0000250"/>
    <property type="project" value="UniProtKB"/>
</dbReference>
<dbReference type="CDD" id="cd18808">
    <property type="entry name" value="SF1_C_Upf1"/>
    <property type="match status" value="1"/>
</dbReference>
<dbReference type="FunFam" id="3.40.50.300:FF:001087">
    <property type="entry name" value="ZGRF1 isoform 9"/>
    <property type="match status" value="1"/>
</dbReference>
<dbReference type="Gene3D" id="3.40.50.300">
    <property type="entry name" value="P-loop containing nucleotide triphosphate hydrolases"/>
    <property type="match status" value="2"/>
</dbReference>
<dbReference type="InterPro" id="IPR041679">
    <property type="entry name" value="DNA2/NAM7-like_C"/>
</dbReference>
<dbReference type="InterPro" id="IPR041677">
    <property type="entry name" value="DNA2/NAM7_AAA_11"/>
</dbReference>
<dbReference type="InterPro" id="IPR052800">
    <property type="entry name" value="DNA_Repair_Helicase_ZGRF1"/>
</dbReference>
<dbReference type="InterPro" id="IPR027417">
    <property type="entry name" value="P-loop_NTPase"/>
</dbReference>
<dbReference type="InterPro" id="IPR047187">
    <property type="entry name" value="SF1_C_Upf1"/>
</dbReference>
<dbReference type="InterPro" id="IPR018838">
    <property type="entry name" value="ZGRF1-like_N"/>
</dbReference>
<dbReference type="InterPro" id="IPR010666">
    <property type="entry name" value="Znf_GRF"/>
</dbReference>
<dbReference type="PANTHER" id="PTHR28535:SF1">
    <property type="entry name" value="PROTEIN ZGRF1"/>
    <property type="match status" value="1"/>
</dbReference>
<dbReference type="PANTHER" id="PTHR28535">
    <property type="entry name" value="ZINC FINGER GRF-TYPE CONTAINING 1"/>
    <property type="match status" value="1"/>
</dbReference>
<dbReference type="Pfam" id="PF13086">
    <property type="entry name" value="AAA_11"/>
    <property type="match status" value="2"/>
</dbReference>
<dbReference type="Pfam" id="PF13087">
    <property type="entry name" value="AAA_12"/>
    <property type="match status" value="1"/>
</dbReference>
<dbReference type="Pfam" id="PF10382">
    <property type="entry name" value="ZGRF1-like_N"/>
    <property type="match status" value="1"/>
</dbReference>
<dbReference type="Pfam" id="PF06839">
    <property type="entry name" value="Zn_ribbon_GRF"/>
    <property type="match status" value="1"/>
</dbReference>
<dbReference type="SUPFAM" id="SSF52540">
    <property type="entry name" value="P-loop containing nucleoside triphosphate hydrolases"/>
    <property type="match status" value="1"/>
</dbReference>
<dbReference type="PROSITE" id="PS51999">
    <property type="entry name" value="ZF_GRF"/>
    <property type="match status" value="1"/>
</dbReference>
<feature type="chain" id="PRO_0000286627" description="5'-3' DNA helicase ZGRF1">
    <location>
        <begin position="1"/>
        <end position="1863"/>
    </location>
</feature>
<feature type="zinc finger region" description="GRF-type" evidence="2">
    <location>
        <begin position="1111"/>
        <end position="1153"/>
    </location>
</feature>
<feature type="region of interest" description="Disordered" evidence="3">
    <location>
        <begin position="78"/>
        <end position="110"/>
    </location>
</feature>
<feature type="region of interest" description="Disordered" evidence="3">
    <location>
        <begin position="132"/>
        <end position="196"/>
    </location>
</feature>
<feature type="region of interest" description="Disordered" evidence="3">
    <location>
        <begin position="300"/>
        <end position="349"/>
    </location>
</feature>
<feature type="region of interest" description="Disordered" evidence="3">
    <location>
        <begin position="460"/>
        <end position="496"/>
    </location>
</feature>
<feature type="region of interest" description="Disordered" evidence="3">
    <location>
        <begin position="524"/>
        <end position="545"/>
    </location>
</feature>
<feature type="region of interest" description="Disordered" evidence="3">
    <location>
        <begin position="610"/>
        <end position="664"/>
    </location>
</feature>
<feature type="compositionally biased region" description="Basic and acidic residues" evidence="3">
    <location>
        <begin position="81"/>
        <end position="90"/>
    </location>
</feature>
<feature type="compositionally biased region" description="Low complexity" evidence="3">
    <location>
        <begin position="92"/>
        <end position="105"/>
    </location>
</feature>
<feature type="compositionally biased region" description="Polar residues" evidence="3">
    <location>
        <begin position="173"/>
        <end position="185"/>
    </location>
</feature>
<feature type="compositionally biased region" description="Polar residues" evidence="3">
    <location>
        <begin position="300"/>
        <end position="321"/>
    </location>
</feature>
<feature type="compositionally biased region" description="Basic and acidic residues" evidence="3">
    <location>
        <begin position="533"/>
        <end position="545"/>
    </location>
</feature>
<feature type="binding site" evidence="2">
    <location>
        <position position="1111"/>
    </location>
    <ligand>
        <name>Zn(2+)</name>
        <dbReference type="ChEBI" id="CHEBI:29105"/>
    </ligand>
</feature>
<feature type="binding site" evidence="2">
    <location>
        <position position="1113"/>
    </location>
    <ligand>
        <name>Zn(2+)</name>
        <dbReference type="ChEBI" id="CHEBI:29105"/>
    </ligand>
</feature>
<feature type="binding site" evidence="2">
    <location>
        <position position="1136"/>
    </location>
    <ligand>
        <name>Zn(2+)</name>
        <dbReference type="ChEBI" id="CHEBI:29105"/>
    </ligand>
</feature>
<feature type="binding site" evidence="2">
    <location>
        <position position="1144"/>
    </location>
    <ligand>
        <name>Zn(2+)</name>
        <dbReference type="ChEBI" id="CHEBI:29105"/>
    </ligand>
</feature>
<feature type="modified residue" description="Phosphoserine" evidence="5">
    <location>
        <position position="331"/>
    </location>
</feature>
<feature type="modified residue" description="Phosphoserine" evidence="5">
    <location>
        <position position="445"/>
    </location>
</feature>
<feature type="splice variant" id="VSP_053245" description="In isoform 2." evidence="4">
    <original>ARKSPAIEVSRALLECPCEHRASQQPVEFQGHQVKGSATSGVMVRGHSLQRGCTQFPDSIDYENFLTDTCVWTPGLPSTYGQTDFLQVISPEQKIPALSPAPTFSFNTRNEDTVLELSEESLKTRTLPGLKTIGFQDSKNLQRFPFLSGASAPFATLPA</original>
    <variation>GTQLFILQSHRDRNDEQVLSPISSSDISGQLLSTTQDHFECHELEESSTQISSPLFYPMGIKHPIYRDSEAYISESKELGRIRSLPCDHFEVETTQRNQQSWATSKSSSELSEVINNMSLLKSQSEHSTALGHLTILKKKHAFPHEVPHSRDPDVSPKG</variation>
    <location>
        <begin position="698"/>
        <end position="856"/>
    </location>
</feature>
<feature type="splice variant" id="VSP_053246" description="In isoform 2." evidence="4">
    <location>
        <begin position="857"/>
        <end position="1863"/>
    </location>
</feature>